<reference key="1">
    <citation type="journal article" date="2018" name="J. Am. Chem. Soc.">
        <title>Biosynthesis of long-chain N-acyl amide by a truncated polyketide synthase-nonribosomal peptide synthetase hybrid megasynthase in fungi.</title>
        <authorList>
            <person name="Hai Y."/>
            <person name="Tang Y."/>
        </authorList>
    </citation>
    <scope>NUCLEOTIDE SEQUENCE [GENOMIC DNA]</scope>
    <scope>FUNCTION</scope>
    <scope>CATALYTIC ACTIVITY</scope>
    <scope>BIOPHYSICOCHEMICAL PROPERTIES</scope>
    <scope>SUBSTRATE SPECIFICITY</scope>
    <scope>SUBUNIT</scope>
    <scope>PATHWAY</scope>
    <source>
        <strain>ATCC 26942 / CBS 387.67 / CCM F-175 / VKM F-2091</strain>
    </source>
</reference>
<feature type="chain" id="PRO_0000452489" description="Polyketide synthase-nonribosomal peptide synthetase TwmB">
    <location>
        <begin position="1"/>
        <end position="2979"/>
    </location>
</feature>
<feature type="domain" description="Ketosynthase family 3 (KS3)" evidence="4 10">
    <location>
        <begin position="5"/>
        <end position="435"/>
    </location>
</feature>
<feature type="domain" description="PKS/mFAS DH" evidence="5">
    <location>
        <begin position="936"/>
        <end position="1235"/>
    </location>
</feature>
<feature type="domain" description="Carrier" evidence="3">
    <location>
        <begin position="2380"/>
        <end position="2465"/>
    </location>
</feature>
<feature type="region of interest" description="Malonyl-CoA:ACP transacylase (MAT) domain" evidence="2 10">
    <location>
        <begin position="549"/>
        <end position="864"/>
    </location>
</feature>
<feature type="region of interest" description="Dehydratase (DH) domain" evidence="2 10">
    <location>
        <begin position="936"/>
        <end position="1234"/>
    </location>
</feature>
<feature type="region of interest" description="N-terminal hotdog fold" evidence="5">
    <location>
        <begin position="936"/>
        <end position="1070"/>
    </location>
</feature>
<feature type="region of interest" description="C-terminal hotdog fold" evidence="5">
    <location>
        <begin position="1085"/>
        <end position="1235"/>
    </location>
</feature>
<feature type="region of interest" description="Inactive methyltransferase (MT) domain" evidence="2 10">
    <location>
        <begin position="1387"/>
        <end position="1572"/>
    </location>
</feature>
<feature type="region of interest" description="Ketoreductase (KR)domain" evidence="2 10">
    <location>
        <begin position="2098"/>
        <end position="2271"/>
    </location>
</feature>
<feature type="region of interest" description="Disordered" evidence="7">
    <location>
        <begin position="2476"/>
        <end position="2497"/>
    </location>
</feature>
<feature type="region of interest" description="Condensation" evidence="1 2">
    <location>
        <begin position="2534"/>
        <end position="2970"/>
    </location>
</feature>
<feature type="compositionally biased region" description="Polar residues" evidence="7">
    <location>
        <begin position="2479"/>
        <end position="2497"/>
    </location>
</feature>
<feature type="active site" description="For beta-ketoacyl synthase activity" evidence="4">
    <location>
        <position position="176"/>
    </location>
</feature>
<feature type="active site" description="For beta-ketoacyl synthase activity" evidence="4">
    <location>
        <position position="315"/>
    </location>
</feature>
<feature type="active site" description="For beta-ketoacyl synthase activity" evidence="4">
    <location>
        <position position="355"/>
    </location>
</feature>
<feature type="active site" description="For malonyltransferase activity" evidence="6">
    <location>
        <position position="643"/>
    </location>
</feature>
<feature type="active site" description="Proton acceptor; for dehydratase activity" evidence="5">
    <location>
        <position position="968"/>
    </location>
</feature>
<feature type="active site" description="Proton donor; for dehydratase activity" evidence="5">
    <location>
        <position position="1141"/>
    </location>
</feature>
<feature type="modified residue" description="O-(pantetheine 4'-phosphoryl)serine" evidence="3">
    <location>
        <position position="2425"/>
    </location>
</feature>
<proteinExistence type="evidence at protein level"/>
<gene>
    <name evidence="9" type="primary">TwmB</name>
    <name evidence="9" type="synonym">TwnB</name>
</gene>
<evidence type="ECO:0000250" key="1">
    <source>
        <dbReference type="UniProtKB" id="A1CLY8"/>
    </source>
</evidence>
<evidence type="ECO:0000255" key="2"/>
<evidence type="ECO:0000255" key="3">
    <source>
        <dbReference type="PROSITE-ProRule" id="PRU00258"/>
    </source>
</evidence>
<evidence type="ECO:0000255" key="4">
    <source>
        <dbReference type="PROSITE-ProRule" id="PRU01348"/>
    </source>
</evidence>
<evidence type="ECO:0000255" key="5">
    <source>
        <dbReference type="PROSITE-ProRule" id="PRU01363"/>
    </source>
</evidence>
<evidence type="ECO:0000255" key="6">
    <source>
        <dbReference type="PROSITE-ProRule" id="PRU10022"/>
    </source>
</evidence>
<evidence type="ECO:0000256" key="7">
    <source>
        <dbReference type="SAM" id="MobiDB-lite"/>
    </source>
</evidence>
<evidence type="ECO:0000269" key="8">
    <source>
    </source>
</evidence>
<evidence type="ECO:0000303" key="9">
    <source>
    </source>
</evidence>
<evidence type="ECO:0000305" key="10">
    <source>
    </source>
</evidence>
<comment type="function">
    <text evidence="8 10">Polyketide synthase-nonribosomal peptide synthetase; part of the gene cluster that mediates the biosynthesis of wortmanamides A and B, reduced long-chain polyketides amidated with a specific omega-amino acid, 5-aminopentanoic acid (5PA) (PubMed:29343058). The PKS modules of TwmB are involved in the synthesis of the polyketide backbone, whereas the non-canonical C domain of TwmB is a bonafide condensation domain that specifically selects 5PA and catalyzes amidation to release polyketide chain (PubMed:29343058). The C domain clearly prefers C16 and C18 fatty acyl substrates, which is consistent with simultaneous formation of both octaketide and nonaketide acyl amides wortmanamides A and B (PubMed:29343058). Because TwmB lacks a designated enoylreductase (ER) domain, the required activity is provided the enoyl reductase TwmE (PubMed:29343058). The roles of the remaining enzymes have still to be clarified (Probable).</text>
</comment>
<comment type="catalytic activity">
    <reaction evidence="8">
        <text>5-aminopentanoate + 7 malonyl-CoA + acetyl-CoA + 11 NADPH + 17 H(+) = wortmanamide A + 7 CO2 + 11 NADP(+) + 8 CoA + 6 H2O</text>
        <dbReference type="Rhea" id="RHEA:66808"/>
        <dbReference type="ChEBI" id="CHEBI:15377"/>
        <dbReference type="ChEBI" id="CHEBI:15378"/>
        <dbReference type="ChEBI" id="CHEBI:16526"/>
        <dbReference type="ChEBI" id="CHEBI:57287"/>
        <dbReference type="ChEBI" id="CHEBI:57288"/>
        <dbReference type="ChEBI" id="CHEBI:57384"/>
        <dbReference type="ChEBI" id="CHEBI:57783"/>
        <dbReference type="ChEBI" id="CHEBI:58349"/>
        <dbReference type="ChEBI" id="CHEBI:167452"/>
        <dbReference type="ChEBI" id="CHEBI:356010"/>
    </reaction>
    <physiologicalReaction direction="left-to-right" evidence="8">
        <dbReference type="Rhea" id="RHEA:66809"/>
    </physiologicalReaction>
</comment>
<comment type="catalytic activity">
    <reaction evidence="8">
        <text>5-aminopentanoate + 8 malonyl-CoA + acetyl-CoA + 13 NADPH + 20 H(+) = wortmanamide B + 8 CO2 + 13 NADP(+) + 9 CoA + 7 H2O</text>
        <dbReference type="Rhea" id="RHEA:66812"/>
        <dbReference type="ChEBI" id="CHEBI:15377"/>
        <dbReference type="ChEBI" id="CHEBI:15378"/>
        <dbReference type="ChEBI" id="CHEBI:16526"/>
        <dbReference type="ChEBI" id="CHEBI:57287"/>
        <dbReference type="ChEBI" id="CHEBI:57288"/>
        <dbReference type="ChEBI" id="CHEBI:57384"/>
        <dbReference type="ChEBI" id="CHEBI:57783"/>
        <dbReference type="ChEBI" id="CHEBI:58349"/>
        <dbReference type="ChEBI" id="CHEBI:167453"/>
        <dbReference type="ChEBI" id="CHEBI:356010"/>
    </reaction>
    <physiologicalReaction direction="left-to-right" evidence="8">
        <dbReference type="Rhea" id="RHEA:66813"/>
    </physiologicalReaction>
</comment>
<comment type="cofactor">
    <cofactor evidence="8">
        <name>pantetheine 4'-phosphate</name>
        <dbReference type="ChEBI" id="CHEBI:47942"/>
    </cofactor>
    <text evidence="8">Binds 1 phosphopantetheine covalently.</text>
</comment>
<comment type="biophysicochemical properties">
    <kinetics>
        <KM evidence="8">2 mM for 5-aminopentanoic acid</KM>
    </kinetics>
</comment>
<comment type="pathway">
    <text evidence="8">Secondary metabolite biosynthesis.</text>
</comment>
<comment type="subunit">
    <text evidence="10">Interacts with TwmE.</text>
</comment>
<comment type="domain">
    <text evidence="8 10">Multidomain protein; including a ketosynthase (KS) that catalyzes repeated decarboxylative condensation to elongate the polyketide backbone; a malonyl-CoA:ACP transacylase (MAT) that selects and transfers the extender unit malonyl-CoA; a dehydratase (DH) domain that reduces hydroxyl groups to enoyl groups; an inactive methyltransferase (CMeT) domain; a ketoreductase (KR) domain that catalyzes beta-ketoreduction steps; and an acyl-carrier protein (ACP) that serves as the tether of the growing and completed polyketide via its phosphopantetheinyl arm (Probable). A C-terminal thioesterase (TE) domain that is often found in polyketide synthase proteins is not present in this protein, but TwmB contains instead a C-terminal condensation (C) domain that specifically selects 5PA and catalyzes amidation to release polyketide chain (PubMed:29343058). This C domain is a bonafide condensation enzyme despite that the second catalytic histidine in the HHxxxDG motif is substituted by proline (PubMed:29343058).</text>
</comment>
<comment type="domain">
    <text evidence="10">Lacks an enoylreductase (ER) domain that reduces enoyl groups to alkyl group which function is performed by the trans-acting enoyl reductase TwmE.</text>
</comment>
<organism>
    <name type="scientific">Talaromyces wortmannii</name>
    <name type="common">Penicillium wortmannii</name>
    <dbReference type="NCBI Taxonomy" id="28567"/>
    <lineage>
        <taxon>Eukaryota</taxon>
        <taxon>Fungi</taxon>
        <taxon>Dikarya</taxon>
        <taxon>Ascomycota</taxon>
        <taxon>Pezizomycotina</taxon>
        <taxon>Eurotiomycetes</taxon>
        <taxon>Eurotiomycetidae</taxon>
        <taxon>Eurotiales</taxon>
        <taxon>Trichocomaceae</taxon>
        <taxon>Talaromyces</taxon>
        <taxon>Talaromyces sect. Islandici</taxon>
    </lineage>
</organism>
<protein>
    <recommendedName>
        <fullName evidence="9">Polyketide synthase-nonribosomal peptide synthetase TwmB</fullName>
        <shortName evidence="9">PKS-NRPS TwmB</shortName>
        <ecNumber evidence="8">6.3.2.-</ecNumber>
    </recommendedName>
    <alternativeName>
        <fullName evidence="9">Wortmanamides biosynthesis cluster protein B</fullName>
    </alternativeName>
</protein>
<sequence>MAGEGAEIAIIGSGCRFPGNASSPSKLWALLQNPTSVASKVPALGGYYHEDALYHGHANVKEAYLLAGEETHRRFDAAFFGIKPSEANVLDPQVRLLLETVYEALEDGGQPMDSLRGSDTAVYAGQMVNDYELLMYRDLENLGRYHATGTSRTMVSNRVSFFFDWHGPSMTIDTACSSSLVALHNAVQQLQSGHSRVAIVAGANLIHDVGSFIAESSLQMLSPNGQSRMWDADADGYARGEGVAAIVLKTREAAEADGDHIECIIRGTAVNQDGKTPGQTMPSASAQAQLIRDCYARAGLDLTNSLHRPQYFEAHGTGTPAGDPIEAEAISSAFFPGASSSLSIFVGSIKTVVGHTEGTAGIAGLLKASLALQNKLIPPNLLFNTLNPRIKPFYDHLHVPTALTPWPSVASGYPRRASVNSFGFGGTNAHAILESYSPPSHPTQVLSTVYIPFVFSAFSEASLKSYLVAFSTYLRENKTTYDLRDIAYSLDARRTRHQVVTTISASTADELCDSIEKKLELSRADPDQRVGVRATHQTAEARKPRVLGVFTGQGAQWAQMGLELITASAVAKSTVESLQKRLDRLPDADRPTWSLVQELERDSSSSHIMEAKFSQPLCTAIQILQINLLRAAGIEFTAVVGHSSGEIAAAYAAGRISAEDAICIAYYRGLYSSLAYGLNGKPGAMMAVGTSPEDAEDLLGFPEFEGRACVAAVNSATSVTISGDQDALEELKVVFEDEHKQARFLKVDKAYHSHHMKECSAKYLESLAALNIQVGSGSQTSWFSSVYEQEVKGRDFLKGPYWDDNMVEPVLFMQAVDNACASTRHFDLAIELGPHPALKGPALQTIQERLSHQIPYTGLFTRGVPAITAFSEGLGYCWTHLGQGVVNLQNYDNFISGNLKCRLVKGLPTYAWDHENEYWHETRYARAVRMRPGPVHDLLGHLTPNSTDQDMRWRQFLRLPEVKWVTGHRLQNLTVFPAAGYIVSVIEAAMSLCKDVSVTLIEIIDVDIDSALVFDNDDVSIEVIISLTGITRRENKAIEADFKYHATSGKDTEPLKLKASGRVRIHLGEACPTVLPPRAQKPPNLVSVSEKKFYDSISELGYQYSGQFASLERIERKLGAATGFISITEASKYLIHPGALDAAFQSTHLTYAAPEDGESRSIYIPRRIKRLTFNPNLCIHARNKQTDLAFDASQPIELPHANKLCDINLYPEHLDHAIIRVQGLECVPFSRQTAKDDREAFSNIVWDVLDPDVEAITKDYHSKTSDSLELAGLLERVAAFYLRSLEKEVPENHPSRYEAPCKGLLQYASNISSQSCATRSQLTQAHWDHDTSEVLTAVCEPYADSIDMKLVFDCGKNLASSVMGESTAGEVSGLMQEWYRSGSGVKNFTAHLAGILKQIVHRYPQMHILEVGPEAGAATNVILTEIGPAFASYTVATSTDILFNPEKALPDIYKAKVLPKELDLSKNPRDQGFTEKSFDVVVASLVLHQSPEFEKCLRNARRLLKPGGHLIVLELRPSLPYFLSVIFSAKSHQWFNAEEGRTSFPAITLLEWDSLLRQTGFSGIDTSTVEQPEIGGPFSIFVSQAMDEKIAFLREPLSTAFPISSPGPTIQDLLILGGNSLKTARLVNQLSAVLKEHCGSLRTARSMGFVDDISPKTIILSLTDLDTNEFKQLDESKWDSLKKIVSHTGTLVWVTHGRLADNPHANMMLGLLRGSARDNSTLDYLLLDIEEAHRIEHSVIAEAILRHRAASQWRESESISYSVESELVMDKAGRFLIPRLMMNEKMNDRYNSNWREIREPARPSLDNIAISASGSGWDVVLEPLPPVRRAQLRTTHSLLSPIRVTGSGCMYISLCSGLLSGDKVIALSSKNNSVVCPQDELSVPVEVPPGSEARFLWLTAHYLLASSILKGLSEEDQVLIHEPSLEFSTAIENEASMLGVEVTFTTKNQDAPDSWMVIHPFSFEQSALARFEDEIFSVFINMAPSQEETESVADIFATALPGHCRKESLRSLFGNKAWTPKGSQIKEIQRRLLRAVSWASGMLTKSHCDGMTSLAIDVLPGTVGQLEPFAVIEWDTVSEVSVKVQPVDTLVSFSDKKTYWLVGLTGGLGLSLCEWMVRRGARYFVISSRQPNIERGWLDGMHKKGVRVEISACDLSKRDQVEGLYAEICSSMPAIGGVAQGAMVLEDVAIQNMTLEQLSRVTKPKVDGSIYLNELFQENTLDFFVFFSSVSSVVGNHGQANYAAANTFMASLAEQRRRKGLAASVMDIGAVFGVGYITRSGNEKLMGKVTLQSGGYVRTSERDFHQLFGEAVLAGKPGSTGPIELVSGVRKVSQREEERPVWETWPRMSHFVMDHEGPEYTTDASNKAHIPVKVRLAEARNNEEAYGIVWEDFVRKLQSLFQIDITSLTKAELGAMRLDQMGIDSLTAVEIRGWLMKTFEVNLPVLKILNGISVGELVDTATEAIPSHLVPNLAGYPAEQTSSQNSDSGQDMASSFDTVVNNPFDSDQVSSFHSDLSSNQEDATATDSKSTVLKSIPVSFTQARFYPSGLFLEDKVGLNHIAWARFTGEVSAERLQRALHSLAEQHEILRTAFFDQAGKQMQHILNTSPVYLEHKQIQNEDEVTELVMSLQKEYVYDVARGETMRVILLSRSATENYFILGVHPLVLDATSFQIYLKWLAFHYTSPNKIHRVKQFAESSEQRHADYAAGKFEAELQFWRNEFSTPIKPLPLLTVAKVNERPKLKAYENIRSSLTIEVDTKTRILDICRRIRATPFHFYLAVLRVLLLQYTAYGDNSEDVTIAVAENGRGYDAEEMDVIGPLYNLVLVRILAQQTTRFEDLLETTRNKTYAALSNSKLPYPMLVEELGLQRIAKDYPFVQVFADYRVGQRTTAEFGEDNKLVMMGFDFNVPYDVFLDTIDEPEGECLHELFLRNDLFGREEADRLARSYKSLVVAFAEHPAMTLGQAALAESECGGKIAQ</sequence>
<accession>A0A2L0P0K3</accession>
<keyword id="KW-0012">Acyltransferase</keyword>
<keyword id="KW-0413">Isomerase</keyword>
<keyword id="KW-0436">Ligase</keyword>
<keyword id="KW-0511">Multifunctional enzyme</keyword>
<keyword id="KW-0560">Oxidoreductase</keyword>
<keyword id="KW-0596">Phosphopantetheine</keyword>
<keyword id="KW-0597">Phosphoprotein</keyword>
<keyword id="KW-0808">Transferase</keyword>
<name>TWMB_TALWO</name>
<dbReference type="EC" id="6.3.2.-" evidence="8"/>
<dbReference type="EMBL" id="MG837519">
    <property type="protein sequence ID" value="AUY61970.1"/>
    <property type="molecule type" value="Genomic_DNA"/>
</dbReference>
<dbReference type="EMBL" id="MH399766">
    <property type="protein sequence ID" value="QBC19710.1"/>
    <property type="molecule type" value="Genomic_DNA"/>
</dbReference>
<dbReference type="SMR" id="A0A2L0P0K3"/>
<dbReference type="GO" id="GO:0004315">
    <property type="term" value="F:3-oxoacyl-[acyl-carrier-protein] synthase activity"/>
    <property type="evidence" value="ECO:0007669"/>
    <property type="project" value="InterPro"/>
</dbReference>
<dbReference type="GO" id="GO:0004312">
    <property type="term" value="F:fatty acid synthase activity"/>
    <property type="evidence" value="ECO:0007669"/>
    <property type="project" value="TreeGrafter"/>
</dbReference>
<dbReference type="GO" id="GO:0016853">
    <property type="term" value="F:isomerase activity"/>
    <property type="evidence" value="ECO:0007669"/>
    <property type="project" value="UniProtKB-KW"/>
</dbReference>
<dbReference type="GO" id="GO:0016874">
    <property type="term" value="F:ligase activity"/>
    <property type="evidence" value="ECO:0007669"/>
    <property type="project" value="UniProtKB-KW"/>
</dbReference>
<dbReference type="GO" id="GO:0016491">
    <property type="term" value="F:oxidoreductase activity"/>
    <property type="evidence" value="ECO:0007669"/>
    <property type="project" value="UniProtKB-KW"/>
</dbReference>
<dbReference type="GO" id="GO:0031177">
    <property type="term" value="F:phosphopantetheine binding"/>
    <property type="evidence" value="ECO:0007669"/>
    <property type="project" value="InterPro"/>
</dbReference>
<dbReference type="GO" id="GO:0008757">
    <property type="term" value="F:S-adenosylmethionine-dependent methyltransferase activity"/>
    <property type="evidence" value="ECO:0007669"/>
    <property type="project" value="InterPro"/>
</dbReference>
<dbReference type="GO" id="GO:0006633">
    <property type="term" value="P:fatty acid biosynthetic process"/>
    <property type="evidence" value="ECO:0007669"/>
    <property type="project" value="InterPro"/>
</dbReference>
<dbReference type="GO" id="GO:0044550">
    <property type="term" value="P:secondary metabolite biosynthetic process"/>
    <property type="evidence" value="ECO:0007669"/>
    <property type="project" value="TreeGrafter"/>
</dbReference>
<dbReference type="CDD" id="cd02440">
    <property type="entry name" value="AdoMet_MTases"/>
    <property type="match status" value="1"/>
</dbReference>
<dbReference type="CDD" id="cd19532">
    <property type="entry name" value="C_PKS-NRPS"/>
    <property type="match status" value="1"/>
</dbReference>
<dbReference type="CDD" id="cd00833">
    <property type="entry name" value="PKS"/>
    <property type="match status" value="1"/>
</dbReference>
<dbReference type="Gene3D" id="3.40.47.10">
    <property type="match status" value="1"/>
</dbReference>
<dbReference type="Gene3D" id="1.10.1200.10">
    <property type="entry name" value="ACP-like"/>
    <property type="match status" value="1"/>
</dbReference>
<dbReference type="Gene3D" id="3.30.559.10">
    <property type="entry name" value="Chloramphenicol acetyltransferase-like domain"/>
    <property type="match status" value="1"/>
</dbReference>
<dbReference type="Gene3D" id="3.40.366.10">
    <property type="entry name" value="Malonyl-Coenzyme A Acyl Carrier Protein, domain 2"/>
    <property type="match status" value="1"/>
</dbReference>
<dbReference type="Gene3D" id="3.40.50.720">
    <property type="entry name" value="NAD(P)-binding Rossmann-like Domain"/>
    <property type="match status" value="1"/>
</dbReference>
<dbReference type="Gene3D" id="3.30.559.30">
    <property type="entry name" value="Nonribosomal peptide synthetase, condensation domain"/>
    <property type="match status" value="1"/>
</dbReference>
<dbReference type="Gene3D" id="3.10.129.110">
    <property type="entry name" value="Polyketide synthase dehydratase"/>
    <property type="match status" value="1"/>
</dbReference>
<dbReference type="Gene3D" id="3.40.50.150">
    <property type="entry name" value="Vaccinia Virus protein VP39"/>
    <property type="match status" value="1"/>
</dbReference>
<dbReference type="InterPro" id="IPR001227">
    <property type="entry name" value="Ac_transferase_dom_sf"/>
</dbReference>
<dbReference type="InterPro" id="IPR036736">
    <property type="entry name" value="ACP-like_sf"/>
</dbReference>
<dbReference type="InterPro" id="IPR014043">
    <property type="entry name" value="Acyl_transferase_dom"/>
</dbReference>
<dbReference type="InterPro" id="IPR016035">
    <property type="entry name" value="Acyl_Trfase/lysoPLipase"/>
</dbReference>
<dbReference type="InterPro" id="IPR023213">
    <property type="entry name" value="CAT-like_dom_sf"/>
</dbReference>
<dbReference type="InterPro" id="IPR001242">
    <property type="entry name" value="Condensatn"/>
</dbReference>
<dbReference type="InterPro" id="IPR018201">
    <property type="entry name" value="Ketoacyl_synth_AS"/>
</dbReference>
<dbReference type="InterPro" id="IPR014031">
    <property type="entry name" value="Ketoacyl_synth_C"/>
</dbReference>
<dbReference type="InterPro" id="IPR014030">
    <property type="entry name" value="Ketoacyl_synth_N"/>
</dbReference>
<dbReference type="InterPro" id="IPR016036">
    <property type="entry name" value="Malonyl_transacylase_ACP-bd"/>
</dbReference>
<dbReference type="InterPro" id="IPR013216">
    <property type="entry name" value="Methyltransf_11"/>
</dbReference>
<dbReference type="InterPro" id="IPR036291">
    <property type="entry name" value="NAD(P)-bd_dom_sf"/>
</dbReference>
<dbReference type="InterPro" id="IPR032821">
    <property type="entry name" value="PKS_assoc"/>
</dbReference>
<dbReference type="InterPro" id="IPR020841">
    <property type="entry name" value="PKS_Beta-ketoAc_synthase_dom"/>
</dbReference>
<dbReference type="InterPro" id="IPR042104">
    <property type="entry name" value="PKS_dehydratase_sf"/>
</dbReference>
<dbReference type="InterPro" id="IPR020807">
    <property type="entry name" value="PKS_DH"/>
</dbReference>
<dbReference type="InterPro" id="IPR049551">
    <property type="entry name" value="PKS_DH_C"/>
</dbReference>
<dbReference type="InterPro" id="IPR049552">
    <property type="entry name" value="PKS_DH_N"/>
</dbReference>
<dbReference type="InterPro" id="IPR013968">
    <property type="entry name" value="PKS_KR"/>
</dbReference>
<dbReference type="InterPro" id="IPR049900">
    <property type="entry name" value="PKS_mFAS_DH"/>
</dbReference>
<dbReference type="InterPro" id="IPR050091">
    <property type="entry name" value="PKS_NRPS_Biosynth_Enz"/>
</dbReference>
<dbReference type="InterPro" id="IPR020806">
    <property type="entry name" value="PKS_PP-bd"/>
</dbReference>
<dbReference type="InterPro" id="IPR009081">
    <property type="entry name" value="PP-bd_ACP"/>
</dbReference>
<dbReference type="InterPro" id="IPR006162">
    <property type="entry name" value="Ppantetheine_attach_site"/>
</dbReference>
<dbReference type="InterPro" id="IPR029063">
    <property type="entry name" value="SAM-dependent_MTases_sf"/>
</dbReference>
<dbReference type="InterPro" id="IPR016039">
    <property type="entry name" value="Thiolase-like"/>
</dbReference>
<dbReference type="PANTHER" id="PTHR43775">
    <property type="entry name" value="FATTY ACID SYNTHASE"/>
    <property type="match status" value="1"/>
</dbReference>
<dbReference type="PANTHER" id="PTHR43775:SF20">
    <property type="entry name" value="HYBRID PKS-NRPS SYNTHETASE APDA"/>
    <property type="match status" value="1"/>
</dbReference>
<dbReference type="Pfam" id="PF23297">
    <property type="entry name" value="ACP_SdgA_C"/>
    <property type="match status" value="1"/>
</dbReference>
<dbReference type="Pfam" id="PF00698">
    <property type="entry name" value="Acyl_transf_1"/>
    <property type="match status" value="1"/>
</dbReference>
<dbReference type="Pfam" id="PF00668">
    <property type="entry name" value="Condensation"/>
    <property type="match status" value="1"/>
</dbReference>
<dbReference type="Pfam" id="PF16197">
    <property type="entry name" value="KAsynt_C_assoc"/>
    <property type="match status" value="1"/>
</dbReference>
<dbReference type="Pfam" id="PF00109">
    <property type="entry name" value="ketoacyl-synt"/>
    <property type="match status" value="1"/>
</dbReference>
<dbReference type="Pfam" id="PF02801">
    <property type="entry name" value="Ketoacyl-synt_C"/>
    <property type="match status" value="1"/>
</dbReference>
<dbReference type="Pfam" id="PF08659">
    <property type="entry name" value="KR"/>
    <property type="match status" value="1"/>
</dbReference>
<dbReference type="Pfam" id="PF08241">
    <property type="entry name" value="Methyltransf_11"/>
    <property type="match status" value="1"/>
</dbReference>
<dbReference type="Pfam" id="PF21089">
    <property type="entry name" value="PKS_DH_N"/>
    <property type="match status" value="1"/>
</dbReference>
<dbReference type="Pfam" id="PF14765">
    <property type="entry name" value="PS-DH"/>
    <property type="match status" value="1"/>
</dbReference>
<dbReference type="SMART" id="SM00827">
    <property type="entry name" value="PKS_AT"/>
    <property type="match status" value="1"/>
</dbReference>
<dbReference type="SMART" id="SM00826">
    <property type="entry name" value="PKS_DH"/>
    <property type="match status" value="1"/>
</dbReference>
<dbReference type="SMART" id="SM00822">
    <property type="entry name" value="PKS_KR"/>
    <property type="match status" value="1"/>
</dbReference>
<dbReference type="SMART" id="SM00825">
    <property type="entry name" value="PKS_KS"/>
    <property type="match status" value="1"/>
</dbReference>
<dbReference type="SMART" id="SM00823">
    <property type="entry name" value="PKS_PP"/>
    <property type="match status" value="1"/>
</dbReference>
<dbReference type="SUPFAM" id="SSF47336">
    <property type="entry name" value="ACP-like"/>
    <property type="match status" value="1"/>
</dbReference>
<dbReference type="SUPFAM" id="SSF52777">
    <property type="entry name" value="CoA-dependent acyltransferases"/>
    <property type="match status" value="2"/>
</dbReference>
<dbReference type="SUPFAM" id="SSF52151">
    <property type="entry name" value="FabD/lysophospholipase-like"/>
    <property type="match status" value="1"/>
</dbReference>
<dbReference type="SUPFAM" id="SSF51735">
    <property type="entry name" value="NAD(P)-binding Rossmann-fold domains"/>
    <property type="match status" value="1"/>
</dbReference>
<dbReference type="SUPFAM" id="SSF55048">
    <property type="entry name" value="Probable ACP-binding domain of malonyl-CoA ACP transacylase"/>
    <property type="match status" value="1"/>
</dbReference>
<dbReference type="SUPFAM" id="SSF53335">
    <property type="entry name" value="S-adenosyl-L-methionine-dependent methyltransferases"/>
    <property type="match status" value="1"/>
</dbReference>
<dbReference type="SUPFAM" id="SSF53901">
    <property type="entry name" value="Thiolase-like"/>
    <property type="match status" value="1"/>
</dbReference>
<dbReference type="PROSITE" id="PS50075">
    <property type="entry name" value="CARRIER"/>
    <property type="match status" value="1"/>
</dbReference>
<dbReference type="PROSITE" id="PS00606">
    <property type="entry name" value="KS3_1"/>
    <property type="match status" value="1"/>
</dbReference>
<dbReference type="PROSITE" id="PS52004">
    <property type="entry name" value="KS3_2"/>
    <property type="match status" value="1"/>
</dbReference>
<dbReference type="PROSITE" id="PS00012">
    <property type="entry name" value="PHOSPHOPANTETHEINE"/>
    <property type="match status" value="1"/>
</dbReference>
<dbReference type="PROSITE" id="PS52019">
    <property type="entry name" value="PKS_MFAS_DH"/>
    <property type="match status" value="1"/>
</dbReference>